<proteinExistence type="inferred from homology"/>
<protein>
    <recommendedName>
        <fullName evidence="1">Putative NADH dehydrogenase/NAD(P)H nitroreductase Pnuc_0932</fullName>
        <ecNumber evidence="1">1.-.-.-</ecNumber>
    </recommendedName>
</protein>
<keyword id="KW-0285">Flavoprotein</keyword>
<keyword id="KW-0288">FMN</keyword>
<keyword id="KW-0520">NAD</keyword>
<keyword id="KW-0521">NADP</keyword>
<keyword id="KW-0560">Oxidoreductase</keyword>
<keyword id="KW-1185">Reference proteome</keyword>
<evidence type="ECO:0000255" key="1">
    <source>
        <dbReference type="HAMAP-Rule" id="MF_01204"/>
    </source>
</evidence>
<feature type="chain" id="PRO_1000138699" description="Putative NADH dehydrogenase/NAD(P)H nitroreductase Pnuc_0932">
    <location>
        <begin position="1"/>
        <end position="196"/>
    </location>
</feature>
<name>Y932_POLAQ</name>
<comment type="cofactor">
    <cofactor evidence="1">
        <name>FMN</name>
        <dbReference type="ChEBI" id="CHEBI:58210"/>
    </cofactor>
</comment>
<comment type="similarity">
    <text evidence="1">Belongs to the nitroreductase family. HadB/RutE subfamily.</text>
</comment>
<accession>A4SXD4</accession>
<dbReference type="EC" id="1.-.-.-" evidence="1"/>
<dbReference type="EMBL" id="CP000655">
    <property type="protein sequence ID" value="ABP34148.1"/>
    <property type="molecule type" value="Genomic_DNA"/>
</dbReference>
<dbReference type="RefSeq" id="WP_011902773.1">
    <property type="nucleotide sequence ID" value="NC_009379.1"/>
</dbReference>
<dbReference type="SMR" id="A4SXD4"/>
<dbReference type="GeneID" id="31481298"/>
<dbReference type="KEGG" id="pnu:Pnuc_0932"/>
<dbReference type="eggNOG" id="COG0778">
    <property type="taxonomic scope" value="Bacteria"/>
</dbReference>
<dbReference type="HOGENOM" id="CLU_084441_0_0_4"/>
<dbReference type="Proteomes" id="UP000000231">
    <property type="component" value="Chromosome"/>
</dbReference>
<dbReference type="GO" id="GO:0016491">
    <property type="term" value="F:oxidoreductase activity"/>
    <property type="evidence" value="ECO:0007669"/>
    <property type="project" value="UniProtKB-UniRule"/>
</dbReference>
<dbReference type="CDD" id="cd02148">
    <property type="entry name" value="RutE-like"/>
    <property type="match status" value="1"/>
</dbReference>
<dbReference type="Gene3D" id="3.40.109.10">
    <property type="entry name" value="NADH Oxidase"/>
    <property type="match status" value="1"/>
</dbReference>
<dbReference type="HAMAP" id="MF_01204">
    <property type="entry name" value="Oxidoreductase_RutE_HadB"/>
    <property type="match status" value="1"/>
</dbReference>
<dbReference type="InterPro" id="IPR029479">
    <property type="entry name" value="Nitroreductase"/>
</dbReference>
<dbReference type="InterPro" id="IPR000415">
    <property type="entry name" value="Nitroreductase-like"/>
</dbReference>
<dbReference type="InterPro" id="IPR050461">
    <property type="entry name" value="Nitroreductase_HadB/RutE"/>
</dbReference>
<dbReference type="InterPro" id="IPR023936">
    <property type="entry name" value="RutE-like"/>
</dbReference>
<dbReference type="NCBIfam" id="NF003768">
    <property type="entry name" value="PRK05365.1"/>
    <property type="match status" value="1"/>
</dbReference>
<dbReference type="PANTHER" id="PTHR43543">
    <property type="entry name" value="MALONIC SEMIALDEHYDE REDUCTASE RUTE-RELATED"/>
    <property type="match status" value="1"/>
</dbReference>
<dbReference type="PANTHER" id="PTHR43543:SF1">
    <property type="entry name" value="MALONIC SEMIALDEHYDE REDUCTASE RUTE-RELATED"/>
    <property type="match status" value="1"/>
</dbReference>
<dbReference type="Pfam" id="PF00881">
    <property type="entry name" value="Nitroreductase"/>
    <property type="match status" value="1"/>
</dbReference>
<dbReference type="SUPFAM" id="SSF55469">
    <property type="entry name" value="FMN-dependent nitroreductase-like"/>
    <property type="match status" value="1"/>
</dbReference>
<reference key="1">
    <citation type="journal article" date="2012" name="Stand. Genomic Sci.">
        <title>Complete genome sequence of Polynucleobacter necessarius subsp. asymbioticus type strain (QLW-P1DMWA-1(T)).</title>
        <authorList>
            <person name="Meincke L."/>
            <person name="Copeland A."/>
            <person name="Lapidus A."/>
            <person name="Lucas S."/>
            <person name="Berry K.W."/>
            <person name="Del Rio T.G."/>
            <person name="Hammon N."/>
            <person name="Dalin E."/>
            <person name="Tice H."/>
            <person name="Pitluck S."/>
            <person name="Richardson P."/>
            <person name="Bruce D."/>
            <person name="Goodwin L."/>
            <person name="Han C."/>
            <person name="Tapia R."/>
            <person name="Detter J.C."/>
            <person name="Schmutz J."/>
            <person name="Brettin T."/>
            <person name="Larimer F."/>
            <person name="Land M."/>
            <person name="Hauser L."/>
            <person name="Kyrpides N.C."/>
            <person name="Ivanova N."/>
            <person name="Goker M."/>
            <person name="Woyke T."/>
            <person name="Wu Q.L."/>
            <person name="Pockl M."/>
            <person name="Hahn M.W."/>
            <person name="Klenk H.P."/>
        </authorList>
    </citation>
    <scope>NUCLEOTIDE SEQUENCE [LARGE SCALE GENOMIC DNA]</scope>
    <source>
        <strain>DSM 18221 / CIP 109841 / QLW-P1DMWA-1</strain>
    </source>
</reference>
<sequence>MASVLNEQSLQQLFISARTHHTWKNTPVSDEQLKQIYDLFKYAPTSVNCSPARIVFVKSAAEKERLLQCVNPGNVEKTKNAPVTAIIGMDLDFYEQLPKLFPHVDAKSWFVGKDTFIEQTAFRNSSLQGAYLILAARAIGLDCGPMSGFDADKVNAAFFPDGRVKVNFLVNIGYGDESSLMPRQPRPSFDEACRIL</sequence>
<gene>
    <name type="ordered locus">Pnuc_0932</name>
</gene>
<organism>
    <name type="scientific">Polynucleobacter asymbioticus (strain DSM 18221 / CIP 109841 / QLW-P1DMWA-1)</name>
    <name type="common">Polynucleobacter necessarius subsp. asymbioticus</name>
    <dbReference type="NCBI Taxonomy" id="312153"/>
    <lineage>
        <taxon>Bacteria</taxon>
        <taxon>Pseudomonadati</taxon>
        <taxon>Pseudomonadota</taxon>
        <taxon>Betaproteobacteria</taxon>
        <taxon>Burkholderiales</taxon>
        <taxon>Burkholderiaceae</taxon>
        <taxon>Polynucleobacter</taxon>
    </lineage>
</organism>